<dbReference type="EC" id="1.14.-.-" evidence="1"/>
<dbReference type="EMBL" id="BX571856">
    <property type="protein sequence ID" value="CAG41746.1"/>
    <property type="molecule type" value="Genomic_DNA"/>
</dbReference>
<dbReference type="RefSeq" id="WP_001109292.1">
    <property type="nucleotide sequence ID" value="NC_002952.2"/>
</dbReference>
<dbReference type="SMR" id="Q6GDB5"/>
<dbReference type="KEGG" id="sar:SAR2771"/>
<dbReference type="HOGENOM" id="CLU_038878_1_0_9"/>
<dbReference type="Proteomes" id="UP000000596">
    <property type="component" value="Chromosome"/>
</dbReference>
<dbReference type="GO" id="GO:0016705">
    <property type="term" value="F:oxidoreductase activity, acting on paired donors, with incorporation or reduction of molecular oxygen"/>
    <property type="evidence" value="ECO:0007669"/>
    <property type="project" value="UniProtKB-UniRule"/>
</dbReference>
<dbReference type="GO" id="GO:0006400">
    <property type="term" value="P:tRNA modification"/>
    <property type="evidence" value="ECO:0007669"/>
    <property type="project" value="UniProtKB-UniRule"/>
</dbReference>
<dbReference type="CDD" id="cd01518">
    <property type="entry name" value="RHOD_YceA"/>
    <property type="match status" value="1"/>
</dbReference>
<dbReference type="Gene3D" id="3.30.70.100">
    <property type="match status" value="1"/>
</dbReference>
<dbReference type="Gene3D" id="3.40.250.10">
    <property type="entry name" value="Rhodanese-like domain"/>
    <property type="match status" value="1"/>
</dbReference>
<dbReference type="HAMAP" id="MF_00469">
    <property type="entry name" value="TrhO"/>
    <property type="match status" value="1"/>
</dbReference>
<dbReference type="InterPro" id="IPR001763">
    <property type="entry name" value="Rhodanese-like_dom"/>
</dbReference>
<dbReference type="InterPro" id="IPR036873">
    <property type="entry name" value="Rhodanese-like_dom_sf"/>
</dbReference>
<dbReference type="InterPro" id="IPR022111">
    <property type="entry name" value="Rhodanese_C"/>
</dbReference>
<dbReference type="InterPro" id="IPR020936">
    <property type="entry name" value="TrhO"/>
</dbReference>
<dbReference type="InterPro" id="IPR040503">
    <property type="entry name" value="TRHO_N"/>
</dbReference>
<dbReference type="NCBIfam" id="NF001135">
    <property type="entry name" value="PRK00142.1-3"/>
    <property type="match status" value="1"/>
</dbReference>
<dbReference type="PANTHER" id="PTHR43268:SF3">
    <property type="entry name" value="RHODANESE-LIKE DOMAIN-CONTAINING PROTEIN 7-RELATED"/>
    <property type="match status" value="1"/>
</dbReference>
<dbReference type="PANTHER" id="PTHR43268">
    <property type="entry name" value="THIOSULFATE SULFURTRANSFERASE/RHODANESE-LIKE DOMAIN-CONTAINING PROTEIN 2"/>
    <property type="match status" value="1"/>
</dbReference>
<dbReference type="Pfam" id="PF00581">
    <property type="entry name" value="Rhodanese"/>
    <property type="match status" value="1"/>
</dbReference>
<dbReference type="Pfam" id="PF12368">
    <property type="entry name" value="Rhodanese_C"/>
    <property type="match status" value="1"/>
</dbReference>
<dbReference type="Pfam" id="PF17773">
    <property type="entry name" value="UPF0176_N"/>
    <property type="match status" value="1"/>
</dbReference>
<dbReference type="SMART" id="SM00450">
    <property type="entry name" value="RHOD"/>
    <property type="match status" value="1"/>
</dbReference>
<dbReference type="SUPFAM" id="SSF52821">
    <property type="entry name" value="Rhodanese/Cell cycle control phosphatase"/>
    <property type="match status" value="1"/>
</dbReference>
<dbReference type="PROSITE" id="PS50206">
    <property type="entry name" value="RHODANESE_3"/>
    <property type="match status" value="1"/>
</dbReference>
<organism>
    <name type="scientific">Staphylococcus aureus (strain MRSA252)</name>
    <dbReference type="NCBI Taxonomy" id="282458"/>
    <lineage>
        <taxon>Bacteria</taxon>
        <taxon>Bacillati</taxon>
        <taxon>Bacillota</taxon>
        <taxon>Bacilli</taxon>
        <taxon>Bacillales</taxon>
        <taxon>Staphylococcaceae</taxon>
        <taxon>Staphylococcus</taxon>
    </lineage>
</organism>
<accession>Q6GDB5</accession>
<gene>
    <name evidence="1" type="primary">trhO</name>
    <name type="ordered locus">SAR2771</name>
</gene>
<reference key="1">
    <citation type="journal article" date="2004" name="Proc. Natl. Acad. Sci. U.S.A.">
        <title>Complete genomes of two clinical Staphylococcus aureus strains: evidence for the rapid evolution of virulence and drug resistance.</title>
        <authorList>
            <person name="Holden M.T.G."/>
            <person name="Feil E.J."/>
            <person name="Lindsay J.A."/>
            <person name="Peacock S.J."/>
            <person name="Day N.P.J."/>
            <person name="Enright M.C."/>
            <person name="Foster T.J."/>
            <person name="Moore C.E."/>
            <person name="Hurst L."/>
            <person name="Atkin R."/>
            <person name="Barron A."/>
            <person name="Bason N."/>
            <person name="Bentley S.D."/>
            <person name="Chillingworth C."/>
            <person name="Chillingworth T."/>
            <person name="Churcher C."/>
            <person name="Clark L."/>
            <person name="Corton C."/>
            <person name="Cronin A."/>
            <person name="Doggett J."/>
            <person name="Dowd L."/>
            <person name="Feltwell T."/>
            <person name="Hance Z."/>
            <person name="Harris B."/>
            <person name="Hauser H."/>
            <person name="Holroyd S."/>
            <person name="Jagels K."/>
            <person name="James K.D."/>
            <person name="Lennard N."/>
            <person name="Line A."/>
            <person name="Mayes R."/>
            <person name="Moule S."/>
            <person name="Mungall K."/>
            <person name="Ormond D."/>
            <person name="Quail M.A."/>
            <person name="Rabbinowitsch E."/>
            <person name="Rutherford K.M."/>
            <person name="Sanders M."/>
            <person name="Sharp S."/>
            <person name="Simmonds M."/>
            <person name="Stevens K."/>
            <person name="Whitehead S."/>
            <person name="Barrell B.G."/>
            <person name="Spratt B.G."/>
            <person name="Parkhill J."/>
        </authorList>
    </citation>
    <scope>NUCLEOTIDE SEQUENCE [LARGE SCALE GENOMIC DNA]</scope>
    <source>
        <strain>MRSA252</strain>
    </source>
</reference>
<proteinExistence type="inferred from homology"/>
<sequence>MNYQVLLYYKYTTIDDPEQFAQDHLAFCKAHHLKGRILVSTEGINGTLSGTKEETEQYMAHMHADERFKDMVFKIDEAEGHAFKKMHVRPRKEIVALDLEEDVDPRHTTGQYLSPVEFRKALEDDDTVIIDARNDYEFDLGHFRGAIRPNITRFRDLPDWIKENKALFADKKVVTYCTGGIRCEKFSGWLLKEGFEDVAQLHGGIATYGKDPETKGQYWDGKMYVFDDRISVDINQVEKTIIGKDWFDGKPCERYINCANPECNKQILVSEENEAKYLGACSYDCAKHERNRYVQANNISGNEWQQRLTNFDDLHQHA</sequence>
<comment type="function">
    <text evidence="1">Catalyzes oxygen-dependent 5-hydroxyuridine (ho5U) modification at position 34 in tRNAs.</text>
</comment>
<comment type="catalytic activity">
    <reaction evidence="1">
        <text>uridine(34) in tRNA + AH2 + O2 = 5-hydroxyuridine(34) in tRNA + A + H2O</text>
        <dbReference type="Rhea" id="RHEA:64224"/>
        <dbReference type="Rhea" id="RHEA-COMP:11727"/>
        <dbReference type="Rhea" id="RHEA-COMP:13381"/>
        <dbReference type="ChEBI" id="CHEBI:13193"/>
        <dbReference type="ChEBI" id="CHEBI:15377"/>
        <dbReference type="ChEBI" id="CHEBI:15379"/>
        <dbReference type="ChEBI" id="CHEBI:17499"/>
        <dbReference type="ChEBI" id="CHEBI:65315"/>
        <dbReference type="ChEBI" id="CHEBI:136877"/>
    </reaction>
</comment>
<comment type="similarity">
    <text evidence="1">Belongs to the TrhO family.</text>
</comment>
<keyword id="KW-0560">Oxidoreductase</keyword>
<keyword id="KW-0819">tRNA processing</keyword>
<name>TRHO_STAAR</name>
<evidence type="ECO:0000255" key="1">
    <source>
        <dbReference type="HAMAP-Rule" id="MF_00469"/>
    </source>
</evidence>
<feature type="chain" id="PRO_0000161516" description="tRNA uridine(34) hydroxylase">
    <location>
        <begin position="1"/>
        <end position="318"/>
    </location>
</feature>
<feature type="domain" description="Rhodanese" evidence="1">
    <location>
        <begin position="123"/>
        <end position="217"/>
    </location>
</feature>
<feature type="active site" description="Cysteine persulfide intermediate" evidence="1">
    <location>
        <position position="177"/>
    </location>
</feature>
<protein>
    <recommendedName>
        <fullName evidence="1">tRNA uridine(34) hydroxylase</fullName>
        <ecNumber evidence="1">1.14.-.-</ecNumber>
    </recommendedName>
    <alternativeName>
        <fullName evidence="1">tRNA hydroxylation protein O</fullName>
    </alternativeName>
</protein>